<dbReference type="EC" id="6.1.1.20" evidence="1"/>
<dbReference type="EMBL" id="CP000730">
    <property type="protein sequence ID" value="ABX29092.1"/>
    <property type="molecule type" value="Genomic_DNA"/>
</dbReference>
<dbReference type="RefSeq" id="WP_000003559.1">
    <property type="nucleotide sequence ID" value="NC_010079.1"/>
</dbReference>
<dbReference type="SMR" id="A8Z1R9"/>
<dbReference type="KEGG" id="sax:USA300HOU_1073"/>
<dbReference type="HOGENOM" id="CLU_025086_0_1_9"/>
<dbReference type="GO" id="GO:0005737">
    <property type="term" value="C:cytoplasm"/>
    <property type="evidence" value="ECO:0007669"/>
    <property type="project" value="UniProtKB-SubCell"/>
</dbReference>
<dbReference type="GO" id="GO:0005524">
    <property type="term" value="F:ATP binding"/>
    <property type="evidence" value="ECO:0007669"/>
    <property type="project" value="UniProtKB-UniRule"/>
</dbReference>
<dbReference type="GO" id="GO:0140096">
    <property type="term" value="F:catalytic activity, acting on a protein"/>
    <property type="evidence" value="ECO:0007669"/>
    <property type="project" value="UniProtKB-ARBA"/>
</dbReference>
<dbReference type="GO" id="GO:0000287">
    <property type="term" value="F:magnesium ion binding"/>
    <property type="evidence" value="ECO:0007669"/>
    <property type="project" value="UniProtKB-UniRule"/>
</dbReference>
<dbReference type="GO" id="GO:0004826">
    <property type="term" value="F:phenylalanine-tRNA ligase activity"/>
    <property type="evidence" value="ECO:0007669"/>
    <property type="project" value="UniProtKB-UniRule"/>
</dbReference>
<dbReference type="GO" id="GO:0016740">
    <property type="term" value="F:transferase activity"/>
    <property type="evidence" value="ECO:0007669"/>
    <property type="project" value="UniProtKB-ARBA"/>
</dbReference>
<dbReference type="GO" id="GO:0000049">
    <property type="term" value="F:tRNA binding"/>
    <property type="evidence" value="ECO:0007669"/>
    <property type="project" value="InterPro"/>
</dbReference>
<dbReference type="GO" id="GO:0006432">
    <property type="term" value="P:phenylalanyl-tRNA aminoacylation"/>
    <property type="evidence" value="ECO:0007669"/>
    <property type="project" value="UniProtKB-UniRule"/>
</dbReference>
<dbReference type="CDD" id="cd00496">
    <property type="entry name" value="PheRS_alpha_core"/>
    <property type="match status" value="1"/>
</dbReference>
<dbReference type="FunFam" id="3.30.930.10:FF:000003">
    <property type="entry name" value="Phenylalanine--tRNA ligase alpha subunit"/>
    <property type="match status" value="1"/>
</dbReference>
<dbReference type="Gene3D" id="3.30.930.10">
    <property type="entry name" value="Bira Bifunctional Protein, Domain 2"/>
    <property type="match status" value="1"/>
</dbReference>
<dbReference type="HAMAP" id="MF_00281">
    <property type="entry name" value="Phe_tRNA_synth_alpha1"/>
    <property type="match status" value="1"/>
</dbReference>
<dbReference type="InterPro" id="IPR006195">
    <property type="entry name" value="aa-tRNA-synth_II"/>
</dbReference>
<dbReference type="InterPro" id="IPR045864">
    <property type="entry name" value="aa-tRNA-synth_II/BPL/LPL"/>
</dbReference>
<dbReference type="InterPro" id="IPR004529">
    <property type="entry name" value="Phe-tRNA-synth_IIc_asu"/>
</dbReference>
<dbReference type="InterPro" id="IPR004188">
    <property type="entry name" value="Phe-tRNA_ligase_II_N"/>
</dbReference>
<dbReference type="InterPro" id="IPR022911">
    <property type="entry name" value="Phe_tRNA_ligase_alpha1_bac"/>
</dbReference>
<dbReference type="InterPro" id="IPR002319">
    <property type="entry name" value="Phenylalanyl-tRNA_Synthase"/>
</dbReference>
<dbReference type="InterPro" id="IPR010978">
    <property type="entry name" value="tRNA-bd_arm"/>
</dbReference>
<dbReference type="NCBIfam" id="TIGR00468">
    <property type="entry name" value="pheS"/>
    <property type="match status" value="1"/>
</dbReference>
<dbReference type="PANTHER" id="PTHR11538:SF41">
    <property type="entry name" value="PHENYLALANINE--TRNA LIGASE, MITOCHONDRIAL"/>
    <property type="match status" value="1"/>
</dbReference>
<dbReference type="PANTHER" id="PTHR11538">
    <property type="entry name" value="PHENYLALANYL-TRNA SYNTHETASE"/>
    <property type="match status" value="1"/>
</dbReference>
<dbReference type="Pfam" id="PF02912">
    <property type="entry name" value="Phe_tRNA-synt_N"/>
    <property type="match status" value="1"/>
</dbReference>
<dbReference type="Pfam" id="PF01409">
    <property type="entry name" value="tRNA-synt_2d"/>
    <property type="match status" value="1"/>
</dbReference>
<dbReference type="SUPFAM" id="SSF55681">
    <property type="entry name" value="Class II aaRS and biotin synthetases"/>
    <property type="match status" value="1"/>
</dbReference>
<dbReference type="SUPFAM" id="SSF46589">
    <property type="entry name" value="tRNA-binding arm"/>
    <property type="match status" value="1"/>
</dbReference>
<dbReference type="PROSITE" id="PS50862">
    <property type="entry name" value="AA_TRNA_LIGASE_II"/>
    <property type="match status" value="1"/>
</dbReference>
<evidence type="ECO:0000255" key="1">
    <source>
        <dbReference type="HAMAP-Rule" id="MF_00281"/>
    </source>
</evidence>
<gene>
    <name evidence="1" type="primary">pheS</name>
    <name type="ordered locus">USA300HOU_1073</name>
</gene>
<comment type="catalytic activity">
    <reaction evidence="1">
        <text>tRNA(Phe) + L-phenylalanine + ATP = L-phenylalanyl-tRNA(Phe) + AMP + diphosphate + H(+)</text>
        <dbReference type="Rhea" id="RHEA:19413"/>
        <dbReference type="Rhea" id="RHEA-COMP:9668"/>
        <dbReference type="Rhea" id="RHEA-COMP:9699"/>
        <dbReference type="ChEBI" id="CHEBI:15378"/>
        <dbReference type="ChEBI" id="CHEBI:30616"/>
        <dbReference type="ChEBI" id="CHEBI:33019"/>
        <dbReference type="ChEBI" id="CHEBI:58095"/>
        <dbReference type="ChEBI" id="CHEBI:78442"/>
        <dbReference type="ChEBI" id="CHEBI:78531"/>
        <dbReference type="ChEBI" id="CHEBI:456215"/>
        <dbReference type="EC" id="6.1.1.20"/>
    </reaction>
</comment>
<comment type="cofactor">
    <cofactor evidence="1">
        <name>Mg(2+)</name>
        <dbReference type="ChEBI" id="CHEBI:18420"/>
    </cofactor>
    <text evidence="1">Binds 2 magnesium ions per tetramer.</text>
</comment>
<comment type="subunit">
    <text evidence="1">Tetramer of two alpha and two beta subunits.</text>
</comment>
<comment type="subcellular location">
    <subcellularLocation>
        <location evidence="1">Cytoplasm</location>
    </subcellularLocation>
</comment>
<comment type="similarity">
    <text evidence="1">Belongs to the class-II aminoacyl-tRNA synthetase family. Phe-tRNA synthetase alpha subunit type 1 subfamily.</text>
</comment>
<feature type="chain" id="PRO_1000078853" description="Phenylalanine--tRNA ligase alpha subunit">
    <location>
        <begin position="1"/>
        <end position="352"/>
    </location>
</feature>
<feature type="binding site" evidence="1">
    <location>
        <position position="258"/>
    </location>
    <ligand>
        <name>Mg(2+)</name>
        <dbReference type="ChEBI" id="CHEBI:18420"/>
        <note>shared with beta subunit</note>
    </ligand>
</feature>
<proteinExistence type="inferred from homology"/>
<reference key="1">
    <citation type="journal article" date="2007" name="BMC Microbiol.">
        <title>Subtle genetic changes enhance virulence of methicillin resistant and sensitive Staphylococcus aureus.</title>
        <authorList>
            <person name="Highlander S.K."/>
            <person name="Hulten K.G."/>
            <person name="Qin X."/>
            <person name="Jiang H."/>
            <person name="Yerrapragada S."/>
            <person name="Mason E.O. Jr."/>
            <person name="Shang Y."/>
            <person name="Williams T.M."/>
            <person name="Fortunov R.M."/>
            <person name="Liu Y."/>
            <person name="Igboeli O."/>
            <person name="Petrosino J."/>
            <person name="Tirumalai M."/>
            <person name="Uzman A."/>
            <person name="Fox G.E."/>
            <person name="Cardenas A.M."/>
            <person name="Muzny D.M."/>
            <person name="Hemphill L."/>
            <person name="Ding Y."/>
            <person name="Dugan S."/>
            <person name="Blyth P.R."/>
            <person name="Buhay C.J."/>
            <person name="Dinh H.H."/>
            <person name="Hawes A.C."/>
            <person name="Holder M."/>
            <person name="Kovar C.L."/>
            <person name="Lee S.L."/>
            <person name="Liu W."/>
            <person name="Nazareth L.V."/>
            <person name="Wang Q."/>
            <person name="Zhou J."/>
            <person name="Kaplan S.L."/>
            <person name="Weinstock G.M."/>
        </authorList>
    </citation>
    <scope>NUCLEOTIDE SEQUENCE [LARGE SCALE GENOMIC DNA]</scope>
    <source>
        <strain>USA300 / TCH1516</strain>
    </source>
</reference>
<protein>
    <recommendedName>
        <fullName evidence="1">Phenylalanine--tRNA ligase alpha subunit</fullName>
        <ecNumber evidence="1">6.1.1.20</ecNumber>
    </recommendedName>
    <alternativeName>
        <fullName evidence="1">Phenylalanyl-tRNA synthetase alpha subunit</fullName>
        <shortName evidence="1">PheRS</shortName>
    </alternativeName>
</protein>
<sequence length="352" mass="40107">MSEQQTMSELKQQALVDINEANDERALQEVKVKYLGKKGSVSGLMKLMKDLPNEDKPAFGQKVNELRQTIQNELDERQQMLVKEKLNKQLAEETIDVSLPGRHIEIGSKHPLTRTIEEIEDLFLGLGYEIVNGYEVEQDHYNFEMLNLPKSHPARDMQDSFYITDEILLRTHTSPVQARTMESRHGQGPVKIICPGKVYRRDSDDATHSHQFTQIEGLVVDKNVKMSDLKGTLELLAKKLFGADREIRLRPSYFPFTEPSVEVDVSCFKCKGKGCNVCKHTGWIEILGAGMVHPNVLEMAGFDSSEYSGFAFGMGPDRIAMLKYGIEDIRHFYTNDVRFLDQFKAVEDRGDM</sequence>
<keyword id="KW-0030">Aminoacyl-tRNA synthetase</keyword>
<keyword id="KW-0067">ATP-binding</keyword>
<keyword id="KW-0963">Cytoplasm</keyword>
<keyword id="KW-0436">Ligase</keyword>
<keyword id="KW-0460">Magnesium</keyword>
<keyword id="KW-0479">Metal-binding</keyword>
<keyword id="KW-0547">Nucleotide-binding</keyword>
<keyword id="KW-0648">Protein biosynthesis</keyword>
<accession>A8Z1R9</accession>
<name>SYFA_STAAT</name>
<organism>
    <name type="scientific">Staphylococcus aureus (strain USA300 / TCH1516)</name>
    <dbReference type="NCBI Taxonomy" id="451516"/>
    <lineage>
        <taxon>Bacteria</taxon>
        <taxon>Bacillati</taxon>
        <taxon>Bacillota</taxon>
        <taxon>Bacilli</taxon>
        <taxon>Bacillales</taxon>
        <taxon>Staphylococcaceae</taxon>
        <taxon>Staphylococcus</taxon>
    </lineage>
</organism>